<organism>
    <name type="scientific">Nitratidesulfovibrio vulgaris (strain DP4)</name>
    <name type="common">Desulfovibrio vulgaris</name>
    <dbReference type="NCBI Taxonomy" id="391774"/>
    <lineage>
        <taxon>Bacteria</taxon>
        <taxon>Pseudomonadati</taxon>
        <taxon>Thermodesulfobacteriota</taxon>
        <taxon>Desulfovibrionia</taxon>
        <taxon>Desulfovibrionales</taxon>
        <taxon>Desulfovibrionaceae</taxon>
        <taxon>Nitratidesulfovibrio</taxon>
    </lineage>
</organism>
<keyword id="KW-0119">Carbohydrate metabolism</keyword>
<keyword id="KW-0963">Cytoplasm</keyword>
<keyword id="KW-0378">Hydrolase</keyword>
<keyword id="KW-0460">Magnesium</keyword>
<keyword id="KW-0479">Metal-binding</keyword>
<name>F16PA_NITV4</name>
<comment type="catalytic activity">
    <reaction evidence="1">
        <text>beta-D-fructose 1,6-bisphosphate + H2O = beta-D-fructose 6-phosphate + phosphate</text>
        <dbReference type="Rhea" id="RHEA:11064"/>
        <dbReference type="ChEBI" id="CHEBI:15377"/>
        <dbReference type="ChEBI" id="CHEBI:32966"/>
        <dbReference type="ChEBI" id="CHEBI:43474"/>
        <dbReference type="ChEBI" id="CHEBI:57634"/>
        <dbReference type="EC" id="3.1.3.11"/>
    </reaction>
</comment>
<comment type="cofactor">
    <cofactor evidence="1">
        <name>Mg(2+)</name>
        <dbReference type="ChEBI" id="CHEBI:18420"/>
    </cofactor>
    <text evidence="1">Binds 2 magnesium ions per subunit.</text>
</comment>
<comment type="pathway">
    <text evidence="1">Carbohydrate biosynthesis; gluconeogenesis.</text>
</comment>
<comment type="subunit">
    <text evidence="1">Homotetramer.</text>
</comment>
<comment type="subcellular location">
    <subcellularLocation>
        <location evidence="1">Cytoplasm</location>
    </subcellularLocation>
</comment>
<comment type="similarity">
    <text evidence="1">Belongs to the FBPase class 1 family.</text>
</comment>
<protein>
    <recommendedName>
        <fullName evidence="1">Fructose-1,6-bisphosphatase class 1</fullName>
        <shortName evidence="1">FBPase class 1</shortName>
        <ecNumber evidence="1">3.1.3.11</ecNumber>
    </recommendedName>
    <alternativeName>
        <fullName evidence="1">D-fructose-1,6-bisphosphate 1-phosphohydrolase class 1</fullName>
    </alternativeName>
</protein>
<evidence type="ECO:0000255" key="1">
    <source>
        <dbReference type="HAMAP-Rule" id="MF_01855"/>
    </source>
</evidence>
<gene>
    <name evidence="1" type="primary">fbp</name>
    <name type="ordered locus">Dvul_1321</name>
</gene>
<sequence>MPEVTVTEHLLLHQKKSPAATGQFTTLLNDLVLSAKIISRSVTKAGLLDVLGGTGEVNVQGELVQKLDEFANRVLIYRMERSGAVCAMASEENADIIKVPEKLHRGDYVLIFDPLDGSSNIDVNINVGTIFSILRRKSPASDDVCIDDVLQPGYEQVAAGYILYGPSTMLVFSTGQGVHGFTLDPSVGEFLLSHPDMSIPERGRIYSINESYWNYWDEPTREIVSYFKGDHNERGKPYSLRYVGSLVADFHRTLLYGGIFMYPMDYRHPDKPQGKLRLMCEASPLAFLAEQAGGRAIDGSRRILDVCPGTLHERIPLFIGSARDVDKVEEIYARHRA</sequence>
<dbReference type="EC" id="3.1.3.11" evidence="1"/>
<dbReference type="EMBL" id="CP000527">
    <property type="protein sequence ID" value="ABM28339.1"/>
    <property type="molecule type" value="Genomic_DNA"/>
</dbReference>
<dbReference type="RefSeq" id="WP_010939127.1">
    <property type="nucleotide sequence ID" value="NC_008751.1"/>
</dbReference>
<dbReference type="SMR" id="A1VD23"/>
<dbReference type="KEGG" id="dvl:Dvul_1321"/>
<dbReference type="HOGENOM" id="CLU_039977_2_2_7"/>
<dbReference type="UniPathway" id="UPA00138"/>
<dbReference type="Proteomes" id="UP000009173">
    <property type="component" value="Chromosome"/>
</dbReference>
<dbReference type="GO" id="GO:0005829">
    <property type="term" value="C:cytosol"/>
    <property type="evidence" value="ECO:0007669"/>
    <property type="project" value="TreeGrafter"/>
</dbReference>
<dbReference type="GO" id="GO:0042132">
    <property type="term" value="F:fructose 1,6-bisphosphate 1-phosphatase activity"/>
    <property type="evidence" value="ECO:0007669"/>
    <property type="project" value="UniProtKB-UniRule"/>
</dbReference>
<dbReference type="GO" id="GO:0000287">
    <property type="term" value="F:magnesium ion binding"/>
    <property type="evidence" value="ECO:0007669"/>
    <property type="project" value="UniProtKB-UniRule"/>
</dbReference>
<dbReference type="GO" id="GO:0030388">
    <property type="term" value="P:fructose 1,6-bisphosphate metabolic process"/>
    <property type="evidence" value="ECO:0007669"/>
    <property type="project" value="TreeGrafter"/>
</dbReference>
<dbReference type="GO" id="GO:0006002">
    <property type="term" value="P:fructose 6-phosphate metabolic process"/>
    <property type="evidence" value="ECO:0007669"/>
    <property type="project" value="TreeGrafter"/>
</dbReference>
<dbReference type="GO" id="GO:0006000">
    <property type="term" value="P:fructose metabolic process"/>
    <property type="evidence" value="ECO:0007669"/>
    <property type="project" value="TreeGrafter"/>
</dbReference>
<dbReference type="GO" id="GO:0006094">
    <property type="term" value="P:gluconeogenesis"/>
    <property type="evidence" value="ECO:0007669"/>
    <property type="project" value="UniProtKB-UniRule"/>
</dbReference>
<dbReference type="GO" id="GO:0005986">
    <property type="term" value="P:sucrose biosynthetic process"/>
    <property type="evidence" value="ECO:0007669"/>
    <property type="project" value="TreeGrafter"/>
</dbReference>
<dbReference type="CDD" id="cd00354">
    <property type="entry name" value="FBPase"/>
    <property type="match status" value="1"/>
</dbReference>
<dbReference type="FunFam" id="3.30.540.10:FF:000002">
    <property type="entry name" value="Fructose-1,6-bisphosphatase class 1"/>
    <property type="match status" value="1"/>
</dbReference>
<dbReference type="FunFam" id="3.40.190.80:FF:000001">
    <property type="entry name" value="Fructose-1,6-bisphosphatase class 1"/>
    <property type="match status" value="1"/>
</dbReference>
<dbReference type="Gene3D" id="3.40.190.80">
    <property type="match status" value="1"/>
</dbReference>
<dbReference type="Gene3D" id="3.30.540.10">
    <property type="entry name" value="Fructose-1,6-Bisphosphatase, subunit A, domain 1"/>
    <property type="match status" value="1"/>
</dbReference>
<dbReference type="HAMAP" id="MF_01855">
    <property type="entry name" value="FBPase_class1"/>
    <property type="match status" value="1"/>
</dbReference>
<dbReference type="InterPro" id="IPR044015">
    <property type="entry name" value="FBPase_C_dom"/>
</dbReference>
<dbReference type="InterPro" id="IPR000146">
    <property type="entry name" value="FBPase_class-1"/>
</dbReference>
<dbReference type="InterPro" id="IPR033391">
    <property type="entry name" value="FBPase_N"/>
</dbReference>
<dbReference type="InterPro" id="IPR028343">
    <property type="entry name" value="FBPtase"/>
</dbReference>
<dbReference type="NCBIfam" id="NF006778">
    <property type="entry name" value="PRK09293.1-1"/>
    <property type="match status" value="1"/>
</dbReference>
<dbReference type="NCBIfam" id="NF006779">
    <property type="entry name" value="PRK09293.1-3"/>
    <property type="match status" value="1"/>
</dbReference>
<dbReference type="PANTHER" id="PTHR11556">
    <property type="entry name" value="FRUCTOSE-1,6-BISPHOSPHATASE-RELATED"/>
    <property type="match status" value="1"/>
</dbReference>
<dbReference type="PANTHER" id="PTHR11556:SF35">
    <property type="entry name" value="SEDOHEPTULOSE-1,7-BISPHOSPHATASE, CHLOROPLASTIC"/>
    <property type="match status" value="1"/>
</dbReference>
<dbReference type="Pfam" id="PF00316">
    <property type="entry name" value="FBPase"/>
    <property type="match status" value="1"/>
</dbReference>
<dbReference type="Pfam" id="PF18913">
    <property type="entry name" value="FBPase_C"/>
    <property type="match status" value="1"/>
</dbReference>
<dbReference type="PIRSF" id="PIRSF500210">
    <property type="entry name" value="FBPtase"/>
    <property type="match status" value="1"/>
</dbReference>
<dbReference type="PIRSF" id="PIRSF000904">
    <property type="entry name" value="FBPtase_SBPase"/>
    <property type="match status" value="1"/>
</dbReference>
<dbReference type="PRINTS" id="PR00115">
    <property type="entry name" value="F16BPHPHTASE"/>
</dbReference>
<dbReference type="SUPFAM" id="SSF56655">
    <property type="entry name" value="Carbohydrate phosphatase"/>
    <property type="match status" value="1"/>
</dbReference>
<feature type="chain" id="PRO_0000364539" description="Fructose-1,6-bisphosphatase class 1">
    <location>
        <begin position="1"/>
        <end position="337"/>
    </location>
</feature>
<feature type="binding site" evidence="1">
    <location>
        <position position="91"/>
    </location>
    <ligand>
        <name>Mg(2+)</name>
        <dbReference type="ChEBI" id="CHEBI:18420"/>
        <label>1</label>
    </ligand>
</feature>
<feature type="binding site" evidence="1">
    <location>
        <position position="113"/>
    </location>
    <ligand>
        <name>Mg(2+)</name>
        <dbReference type="ChEBI" id="CHEBI:18420"/>
        <label>1</label>
    </ligand>
</feature>
<feature type="binding site" evidence="1">
    <location>
        <position position="113"/>
    </location>
    <ligand>
        <name>Mg(2+)</name>
        <dbReference type="ChEBI" id="CHEBI:18420"/>
        <label>2</label>
    </ligand>
</feature>
<feature type="binding site" evidence="1">
    <location>
        <position position="115"/>
    </location>
    <ligand>
        <name>Mg(2+)</name>
        <dbReference type="ChEBI" id="CHEBI:18420"/>
        <label>1</label>
    </ligand>
</feature>
<feature type="binding site" evidence="1">
    <location>
        <begin position="116"/>
        <end position="119"/>
    </location>
    <ligand>
        <name>substrate</name>
    </ligand>
</feature>
<feature type="binding site" evidence="1">
    <location>
        <position position="116"/>
    </location>
    <ligand>
        <name>Mg(2+)</name>
        <dbReference type="ChEBI" id="CHEBI:18420"/>
        <label>2</label>
    </ligand>
</feature>
<feature type="binding site" evidence="1">
    <location>
        <position position="209"/>
    </location>
    <ligand>
        <name>substrate</name>
    </ligand>
</feature>
<feature type="binding site" evidence="1">
    <location>
        <position position="242"/>
    </location>
    <ligand>
        <name>substrate</name>
    </ligand>
</feature>
<feature type="binding site" evidence="1">
    <location>
        <position position="275"/>
    </location>
    <ligand>
        <name>substrate</name>
    </ligand>
</feature>
<feature type="binding site" evidence="1">
    <location>
        <position position="281"/>
    </location>
    <ligand>
        <name>Mg(2+)</name>
        <dbReference type="ChEBI" id="CHEBI:18420"/>
        <label>2</label>
    </ligand>
</feature>
<reference key="1">
    <citation type="journal article" date="2009" name="Environ. Microbiol.">
        <title>Contribution of mobile genetic elements to Desulfovibrio vulgaris genome plasticity.</title>
        <authorList>
            <person name="Walker C.B."/>
            <person name="Stolyar S."/>
            <person name="Chivian D."/>
            <person name="Pinel N."/>
            <person name="Gabster J.A."/>
            <person name="Dehal P.S."/>
            <person name="He Z."/>
            <person name="Yang Z.K."/>
            <person name="Yen H.C."/>
            <person name="Zhou J."/>
            <person name="Wall J.D."/>
            <person name="Hazen T.C."/>
            <person name="Arkin A.P."/>
            <person name="Stahl D.A."/>
        </authorList>
    </citation>
    <scope>NUCLEOTIDE SEQUENCE [LARGE SCALE GENOMIC DNA]</scope>
    <source>
        <strain>DP4</strain>
    </source>
</reference>
<accession>A1VD23</accession>
<proteinExistence type="inferred from homology"/>